<accession>Q09G42</accession>
<protein>
    <recommendedName>
        <fullName evidence="1">NAD(P)H-quinone oxidoreductase subunit K, chloroplastic</fullName>
        <ecNumber evidence="1">7.1.1.-</ecNumber>
    </recommendedName>
    <alternativeName>
        <fullName evidence="1">NAD(P)H dehydrogenase subunit K</fullName>
    </alternativeName>
    <alternativeName>
        <fullName evidence="1">NADH-plastoquinone oxidoreductase subunit K</fullName>
    </alternativeName>
</protein>
<organism>
    <name type="scientific">Platanus occidentalis</name>
    <name type="common">Sycamore</name>
    <name type="synonym">American plane tree</name>
    <dbReference type="NCBI Taxonomy" id="4403"/>
    <lineage>
        <taxon>Eukaryota</taxon>
        <taxon>Viridiplantae</taxon>
        <taxon>Streptophyta</taxon>
        <taxon>Embryophyta</taxon>
        <taxon>Tracheophyta</taxon>
        <taxon>Spermatophyta</taxon>
        <taxon>Magnoliopsida</taxon>
        <taxon>Proteales</taxon>
        <taxon>Platanaceae</taxon>
        <taxon>Platanus</taxon>
    </lineage>
</organism>
<keyword id="KW-0004">4Fe-4S</keyword>
<keyword id="KW-0150">Chloroplast</keyword>
<keyword id="KW-0408">Iron</keyword>
<keyword id="KW-0411">Iron-sulfur</keyword>
<keyword id="KW-0472">Membrane</keyword>
<keyword id="KW-0479">Metal-binding</keyword>
<keyword id="KW-0520">NAD</keyword>
<keyword id="KW-0521">NADP</keyword>
<keyword id="KW-0934">Plastid</keyword>
<keyword id="KW-0618">Plastoquinone</keyword>
<keyword id="KW-0874">Quinone</keyword>
<keyword id="KW-0793">Thylakoid</keyword>
<keyword id="KW-1278">Translocase</keyword>
<keyword id="KW-0813">Transport</keyword>
<dbReference type="EC" id="7.1.1.-" evidence="1"/>
<dbReference type="EMBL" id="DQ923116">
    <property type="protein sequence ID" value="ABI49782.1"/>
    <property type="status" value="ALT_INIT"/>
    <property type="molecule type" value="Genomic_DNA"/>
</dbReference>
<dbReference type="RefSeq" id="YP_740569.2">
    <property type="nucleotide sequence ID" value="NC_008335.1"/>
</dbReference>
<dbReference type="SMR" id="Q09G42"/>
<dbReference type="GeneID" id="4271340"/>
<dbReference type="GO" id="GO:0009535">
    <property type="term" value="C:chloroplast thylakoid membrane"/>
    <property type="evidence" value="ECO:0007669"/>
    <property type="project" value="UniProtKB-SubCell"/>
</dbReference>
<dbReference type="GO" id="GO:0045271">
    <property type="term" value="C:respiratory chain complex I"/>
    <property type="evidence" value="ECO:0007669"/>
    <property type="project" value="TreeGrafter"/>
</dbReference>
<dbReference type="GO" id="GO:0051539">
    <property type="term" value="F:4 iron, 4 sulfur cluster binding"/>
    <property type="evidence" value="ECO:0007669"/>
    <property type="project" value="UniProtKB-KW"/>
</dbReference>
<dbReference type="GO" id="GO:0005506">
    <property type="term" value="F:iron ion binding"/>
    <property type="evidence" value="ECO:0007669"/>
    <property type="project" value="UniProtKB-UniRule"/>
</dbReference>
<dbReference type="GO" id="GO:0008137">
    <property type="term" value="F:NADH dehydrogenase (ubiquinone) activity"/>
    <property type="evidence" value="ECO:0007669"/>
    <property type="project" value="InterPro"/>
</dbReference>
<dbReference type="GO" id="GO:0048038">
    <property type="term" value="F:quinone binding"/>
    <property type="evidence" value="ECO:0007669"/>
    <property type="project" value="UniProtKB-KW"/>
</dbReference>
<dbReference type="GO" id="GO:0009060">
    <property type="term" value="P:aerobic respiration"/>
    <property type="evidence" value="ECO:0007669"/>
    <property type="project" value="TreeGrafter"/>
</dbReference>
<dbReference type="GO" id="GO:0015990">
    <property type="term" value="P:electron transport coupled proton transport"/>
    <property type="evidence" value="ECO:0007669"/>
    <property type="project" value="TreeGrafter"/>
</dbReference>
<dbReference type="GO" id="GO:0019684">
    <property type="term" value="P:photosynthesis, light reaction"/>
    <property type="evidence" value="ECO:0007669"/>
    <property type="project" value="UniProtKB-UniRule"/>
</dbReference>
<dbReference type="FunFam" id="3.40.50.12280:FF:000003">
    <property type="entry name" value="NAD(P)H-quinone oxidoreductase subunit K, chloroplastic"/>
    <property type="match status" value="1"/>
</dbReference>
<dbReference type="Gene3D" id="3.40.50.12280">
    <property type="match status" value="1"/>
</dbReference>
<dbReference type="HAMAP" id="MF_01356">
    <property type="entry name" value="NDH1_NuoB"/>
    <property type="match status" value="1"/>
</dbReference>
<dbReference type="InterPro" id="IPR006137">
    <property type="entry name" value="NADH_UbQ_OxRdtase-like_20kDa"/>
</dbReference>
<dbReference type="InterPro" id="IPR006138">
    <property type="entry name" value="NADH_UQ_OxRdtase_20Kd_su"/>
</dbReference>
<dbReference type="NCBIfam" id="TIGR01957">
    <property type="entry name" value="nuoB_fam"/>
    <property type="match status" value="1"/>
</dbReference>
<dbReference type="NCBIfam" id="NF005012">
    <property type="entry name" value="PRK06411.1"/>
    <property type="match status" value="1"/>
</dbReference>
<dbReference type="PANTHER" id="PTHR11995">
    <property type="entry name" value="NADH DEHYDROGENASE"/>
    <property type="match status" value="1"/>
</dbReference>
<dbReference type="PANTHER" id="PTHR11995:SF14">
    <property type="entry name" value="NADH DEHYDROGENASE [UBIQUINONE] IRON-SULFUR PROTEIN 7, MITOCHONDRIAL"/>
    <property type="match status" value="1"/>
</dbReference>
<dbReference type="Pfam" id="PF01058">
    <property type="entry name" value="Oxidored_q6"/>
    <property type="match status" value="1"/>
</dbReference>
<dbReference type="SUPFAM" id="SSF56770">
    <property type="entry name" value="HydA/Nqo6-like"/>
    <property type="match status" value="1"/>
</dbReference>
<dbReference type="PROSITE" id="PS01150">
    <property type="entry name" value="COMPLEX1_20K"/>
    <property type="match status" value="1"/>
</dbReference>
<feature type="chain" id="PRO_0000358577" description="NAD(P)H-quinone oxidoreductase subunit K, chloroplastic">
    <location>
        <begin position="1"/>
        <end position="225"/>
    </location>
</feature>
<feature type="binding site" evidence="1">
    <location>
        <position position="43"/>
    </location>
    <ligand>
        <name>[4Fe-4S] cluster</name>
        <dbReference type="ChEBI" id="CHEBI:49883"/>
    </ligand>
</feature>
<feature type="binding site" evidence="1">
    <location>
        <position position="44"/>
    </location>
    <ligand>
        <name>[4Fe-4S] cluster</name>
        <dbReference type="ChEBI" id="CHEBI:49883"/>
    </ligand>
</feature>
<feature type="binding site" evidence="1">
    <location>
        <position position="108"/>
    </location>
    <ligand>
        <name>[4Fe-4S] cluster</name>
        <dbReference type="ChEBI" id="CHEBI:49883"/>
    </ligand>
</feature>
<feature type="binding site" evidence="1">
    <location>
        <position position="139"/>
    </location>
    <ligand>
        <name>[4Fe-4S] cluster</name>
        <dbReference type="ChEBI" id="CHEBI:49883"/>
    </ligand>
</feature>
<reference key="1">
    <citation type="journal article" date="2006" name="BMC Plant Biol.">
        <title>Rapid and accurate pyrosequencing of angiosperm plastid genomes.</title>
        <authorList>
            <person name="Moore M.J."/>
            <person name="Dhingra A."/>
            <person name="Soltis P.S."/>
            <person name="Shaw R."/>
            <person name="Farmerie W.G."/>
            <person name="Folta K.M."/>
            <person name="Soltis D.E."/>
        </authorList>
    </citation>
    <scope>NUCLEOTIDE SEQUENCE [LARGE SCALE GENOMIC DNA]</scope>
</reference>
<proteinExistence type="inferred from homology"/>
<geneLocation type="chloroplast"/>
<name>NDHK_PLAOC</name>
<sequence length="225" mass="25326">MNSIEFPLLDRTTQNSVISTTPNDLSNWSRLSSLWPLLYGTSCCFIEFASLIGSRFDFDRYGLVPRSSPRQADLILTAGTVTMKMAPSLVRLYEQMPEPKYVIAMGACTITGGMFSTDSYSTVRGVDKLIPVDVYLPGCPPKPEAVIDAITKLRKKVSREIYEDRIWPQQESRCFTTNHKFHVGRSTHTGNYDQGLLYQSPSTSEIPSEIFFKYKSSVSSHELVN</sequence>
<comment type="function">
    <text evidence="1">NDH shuttles electrons from NAD(P)H:plastoquinone, via FMN and iron-sulfur (Fe-S) centers, to quinones in the photosynthetic chain and possibly in a chloroplast respiratory chain. The immediate electron acceptor for the enzyme in this species is believed to be plastoquinone. Couples the redox reaction to proton translocation, and thus conserves the redox energy in a proton gradient.</text>
</comment>
<comment type="catalytic activity">
    <reaction evidence="1">
        <text>a plastoquinone + NADH + (n+1) H(+)(in) = a plastoquinol + NAD(+) + n H(+)(out)</text>
        <dbReference type="Rhea" id="RHEA:42608"/>
        <dbReference type="Rhea" id="RHEA-COMP:9561"/>
        <dbReference type="Rhea" id="RHEA-COMP:9562"/>
        <dbReference type="ChEBI" id="CHEBI:15378"/>
        <dbReference type="ChEBI" id="CHEBI:17757"/>
        <dbReference type="ChEBI" id="CHEBI:57540"/>
        <dbReference type="ChEBI" id="CHEBI:57945"/>
        <dbReference type="ChEBI" id="CHEBI:62192"/>
    </reaction>
</comment>
<comment type="catalytic activity">
    <reaction evidence="1">
        <text>a plastoquinone + NADPH + (n+1) H(+)(in) = a plastoquinol + NADP(+) + n H(+)(out)</text>
        <dbReference type="Rhea" id="RHEA:42612"/>
        <dbReference type="Rhea" id="RHEA-COMP:9561"/>
        <dbReference type="Rhea" id="RHEA-COMP:9562"/>
        <dbReference type="ChEBI" id="CHEBI:15378"/>
        <dbReference type="ChEBI" id="CHEBI:17757"/>
        <dbReference type="ChEBI" id="CHEBI:57783"/>
        <dbReference type="ChEBI" id="CHEBI:58349"/>
        <dbReference type="ChEBI" id="CHEBI:62192"/>
    </reaction>
</comment>
<comment type="cofactor">
    <cofactor evidence="1">
        <name>[4Fe-4S] cluster</name>
        <dbReference type="ChEBI" id="CHEBI:49883"/>
    </cofactor>
    <text evidence="1">Binds 1 [4Fe-4S] cluster.</text>
</comment>
<comment type="subunit">
    <text evidence="1">NDH is composed of at least 16 different subunits, 5 of which are encoded in the nucleus.</text>
</comment>
<comment type="subcellular location">
    <subcellularLocation>
        <location evidence="1">Plastid</location>
        <location evidence="1">Chloroplast thylakoid membrane</location>
        <topology evidence="1">Peripheral membrane protein</topology>
        <orientation evidence="1">Stromal side</orientation>
    </subcellularLocation>
</comment>
<comment type="similarity">
    <text evidence="1">Belongs to the complex I 20 kDa subunit family.</text>
</comment>
<comment type="sequence caution" evidence="2">
    <conflict type="erroneous initiation">
        <sequence resource="EMBL-CDS" id="ABI49782"/>
    </conflict>
</comment>
<gene>
    <name evidence="1" type="primary">ndhK</name>
</gene>
<evidence type="ECO:0000255" key="1">
    <source>
        <dbReference type="HAMAP-Rule" id="MF_01356"/>
    </source>
</evidence>
<evidence type="ECO:0000305" key="2"/>